<gene>
    <name evidence="1" type="primary">idi</name>
    <name type="ordered locus">Jann_0168</name>
</gene>
<evidence type="ECO:0000255" key="1">
    <source>
        <dbReference type="HAMAP-Rule" id="MF_00202"/>
    </source>
</evidence>
<organism>
    <name type="scientific">Jannaschia sp. (strain CCS1)</name>
    <dbReference type="NCBI Taxonomy" id="290400"/>
    <lineage>
        <taxon>Bacteria</taxon>
        <taxon>Pseudomonadati</taxon>
        <taxon>Pseudomonadota</taxon>
        <taxon>Alphaproteobacteria</taxon>
        <taxon>Rhodobacterales</taxon>
        <taxon>Roseobacteraceae</taxon>
        <taxon>Jannaschia</taxon>
    </lineage>
</organism>
<keyword id="KW-0149">Chlorophyll biosynthesis</keyword>
<keyword id="KW-0963">Cytoplasm</keyword>
<keyword id="KW-0413">Isomerase</keyword>
<keyword id="KW-0414">Isoprene biosynthesis</keyword>
<keyword id="KW-0460">Magnesium</keyword>
<keyword id="KW-0464">Manganese</keyword>
<keyword id="KW-0479">Metal-binding</keyword>
<keyword id="KW-0602">Photosynthesis</keyword>
<keyword id="KW-1185">Reference proteome</keyword>
<name>IDI_JANSC</name>
<comment type="function">
    <text evidence="1">Catalyzes the 1,3-allylic rearrangement of the homoallylic substrate isopentenyl (IPP) to its highly electrophilic allylic isomer, dimethylallyl diphosphate (DMAPP).</text>
</comment>
<comment type="catalytic activity">
    <reaction evidence="1">
        <text>isopentenyl diphosphate = dimethylallyl diphosphate</text>
        <dbReference type="Rhea" id="RHEA:23284"/>
        <dbReference type="ChEBI" id="CHEBI:57623"/>
        <dbReference type="ChEBI" id="CHEBI:128769"/>
        <dbReference type="EC" id="5.3.3.2"/>
    </reaction>
</comment>
<comment type="cofactor">
    <cofactor evidence="1">
        <name>Mg(2+)</name>
        <dbReference type="ChEBI" id="CHEBI:18420"/>
    </cofactor>
    <text evidence="1">Binds 1 Mg(2+) ion per subunit. The magnesium ion binds only when substrate is bound.</text>
</comment>
<comment type="cofactor">
    <cofactor evidence="1">
        <name>Mn(2+)</name>
        <dbReference type="ChEBI" id="CHEBI:29035"/>
    </cofactor>
    <text evidence="1">Binds 1 Mn(2+) ion per subunit.</text>
</comment>
<comment type="pathway">
    <text evidence="1">Isoprenoid biosynthesis; dimethylallyl diphosphate biosynthesis; dimethylallyl diphosphate from isopentenyl diphosphate: step 1/1.</text>
</comment>
<comment type="pathway">
    <text evidence="1">Porphyrin-containing compound metabolism; chlorophyll biosynthesis.</text>
</comment>
<comment type="subcellular location">
    <subcellularLocation>
        <location evidence="1">Cytoplasm</location>
    </subcellularLocation>
</comment>
<comment type="similarity">
    <text evidence="1">Belongs to the IPP isomerase type 1 family.</text>
</comment>
<sequence length="176" mass="20026">MTIHIPTWVNGTLQPVEKLEAHLRGLRHKAISVFILRDGDVLLQRRAMGKYHTPGLWANTCCTHPQWDEAGVDCAMRRLDEELGVKDVPLRYRDTVEYRADVGGGLIEHEVVDIFVGEMPSGMEPVMNPEEVMEVEWTPLATLAQRVEASPETFTPWLHIYLRKYADIIFESATDA</sequence>
<proteinExistence type="inferred from homology"/>
<reference key="1">
    <citation type="submission" date="2006-02" db="EMBL/GenBank/DDBJ databases">
        <title>Complete sequence of chromosome of Jannaschia sp. CCS1.</title>
        <authorList>
            <consortium name="US DOE Joint Genome Institute"/>
            <person name="Copeland A."/>
            <person name="Lucas S."/>
            <person name="Lapidus A."/>
            <person name="Barry K."/>
            <person name="Detter J.C."/>
            <person name="Glavina del Rio T."/>
            <person name="Hammon N."/>
            <person name="Israni S."/>
            <person name="Pitluck S."/>
            <person name="Brettin T."/>
            <person name="Bruce D."/>
            <person name="Han C."/>
            <person name="Tapia R."/>
            <person name="Gilna P."/>
            <person name="Chertkov O."/>
            <person name="Saunders E."/>
            <person name="Schmutz J."/>
            <person name="Larimer F."/>
            <person name="Land M."/>
            <person name="Kyrpides N."/>
            <person name="Lykidis A."/>
            <person name="Moran M.A."/>
            <person name="Belas R."/>
            <person name="Ye W."/>
            <person name="Buchan A."/>
            <person name="Gonzalez J.M."/>
            <person name="Schell M.A."/>
            <person name="Richardson P."/>
        </authorList>
    </citation>
    <scope>NUCLEOTIDE SEQUENCE [LARGE SCALE GENOMIC DNA]</scope>
    <source>
        <strain>CCS1</strain>
    </source>
</reference>
<dbReference type="EC" id="5.3.3.2" evidence="1"/>
<dbReference type="EMBL" id="CP000264">
    <property type="protein sequence ID" value="ABD53085.1"/>
    <property type="molecule type" value="Genomic_DNA"/>
</dbReference>
<dbReference type="RefSeq" id="WP_011453294.1">
    <property type="nucleotide sequence ID" value="NC_007802.1"/>
</dbReference>
<dbReference type="SMR" id="Q28W27"/>
<dbReference type="STRING" id="290400.Jann_0168"/>
<dbReference type="KEGG" id="jan:Jann_0168"/>
<dbReference type="eggNOG" id="COG1443">
    <property type="taxonomic scope" value="Bacteria"/>
</dbReference>
<dbReference type="HOGENOM" id="CLU_060552_2_1_5"/>
<dbReference type="OrthoDB" id="9809458at2"/>
<dbReference type="UniPathway" id="UPA00059">
    <property type="reaction ID" value="UER00104"/>
</dbReference>
<dbReference type="UniPathway" id="UPA00668"/>
<dbReference type="Proteomes" id="UP000008326">
    <property type="component" value="Chromosome"/>
</dbReference>
<dbReference type="GO" id="GO:0005737">
    <property type="term" value="C:cytoplasm"/>
    <property type="evidence" value="ECO:0007669"/>
    <property type="project" value="UniProtKB-SubCell"/>
</dbReference>
<dbReference type="GO" id="GO:0004452">
    <property type="term" value="F:isopentenyl-diphosphate delta-isomerase activity"/>
    <property type="evidence" value="ECO:0007669"/>
    <property type="project" value="UniProtKB-UniRule"/>
</dbReference>
<dbReference type="GO" id="GO:0046872">
    <property type="term" value="F:metal ion binding"/>
    <property type="evidence" value="ECO:0007669"/>
    <property type="project" value="UniProtKB-KW"/>
</dbReference>
<dbReference type="GO" id="GO:0015995">
    <property type="term" value="P:chlorophyll biosynthetic process"/>
    <property type="evidence" value="ECO:0007669"/>
    <property type="project" value="UniProtKB-UniRule"/>
</dbReference>
<dbReference type="GO" id="GO:0050992">
    <property type="term" value="P:dimethylallyl diphosphate biosynthetic process"/>
    <property type="evidence" value="ECO:0007669"/>
    <property type="project" value="UniProtKB-UniRule"/>
</dbReference>
<dbReference type="GO" id="GO:0009240">
    <property type="term" value="P:isopentenyl diphosphate biosynthetic process"/>
    <property type="evidence" value="ECO:0007669"/>
    <property type="project" value="TreeGrafter"/>
</dbReference>
<dbReference type="GO" id="GO:0015979">
    <property type="term" value="P:photosynthesis"/>
    <property type="evidence" value="ECO:0007669"/>
    <property type="project" value="UniProtKB-UniRule"/>
</dbReference>
<dbReference type="CDD" id="cd02885">
    <property type="entry name" value="NUDIX_IPP_Isomerase"/>
    <property type="match status" value="1"/>
</dbReference>
<dbReference type="Gene3D" id="3.90.79.10">
    <property type="entry name" value="Nucleoside Triphosphate Pyrophosphohydrolase"/>
    <property type="match status" value="1"/>
</dbReference>
<dbReference type="HAMAP" id="MF_00202">
    <property type="entry name" value="Idi"/>
    <property type="match status" value="1"/>
</dbReference>
<dbReference type="InterPro" id="IPR056375">
    <property type="entry name" value="Idi_bact"/>
</dbReference>
<dbReference type="InterPro" id="IPR011876">
    <property type="entry name" value="IsopentenylPP_isomerase_typ1"/>
</dbReference>
<dbReference type="InterPro" id="IPR015797">
    <property type="entry name" value="NUDIX_hydrolase-like_dom_sf"/>
</dbReference>
<dbReference type="InterPro" id="IPR000086">
    <property type="entry name" value="NUDIX_hydrolase_dom"/>
</dbReference>
<dbReference type="NCBIfam" id="TIGR02150">
    <property type="entry name" value="IPP_isom_1"/>
    <property type="match status" value="1"/>
</dbReference>
<dbReference type="NCBIfam" id="NF002995">
    <property type="entry name" value="PRK03759.1"/>
    <property type="match status" value="1"/>
</dbReference>
<dbReference type="PANTHER" id="PTHR10885">
    <property type="entry name" value="ISOPENTENYL-DIPHOSPHATE DELTA-ISOMERASE"/>
    <property type="match status" value="1"/>
</dbReference>
<dbReference type="PANTHER" id="PTHR10885:SF0">
    <property type="entry name" value="ISOPENTENYL-DIPHOSPHATE DELTA-ISOMERASE"/>
    <property type="match status" value="1"/>
</dbReference>
<dbReference type="Pfam" id="PF00293">
    <property type="entry name" value="NUDIX"/>
    <property type="match status" value="1"/>
</dbReference>
<dbReference type="PIRSF" id="PIRSF018427">
    <property type="entry name" value="Isopntndiph_ism"/>
    <property type="match status" value="1"/>
</dbReference>
<dbReference type="SUPFAM" id="SSF55811">
    <property type="entry name" value="Nudix"/>
    <property type="match status" value="1"/>
</dbReference>
<dbReference type="PROSITE" id="PS51462">
    <property type="entry name" value="NUDIX"/>
    <property type="match status" value="1"/>
</dbReference>
<feature type="chain" id="PRO_1000012172" description="Isopentenyl-diphosphate Delta-isomerase">
    <location>
        <begin position="1"/>
        <end position="176"/>
    </location>
</feature>
<feature type="domain" description="Nudix hydrolase">
    <location>
        <begin position="26"/>
        <end position="160"/>
    </location>
</feature>
<feature type="active site" evidence="1">
    <location>
        <position position="62"/>
    </location>
</feature>
<feature type="active site" evidence="1">
    <location>
        <position position="110"/>
    </location>
</feature>
<feature type="binding site" evidence="1">
    <location>
        <position position="22"/>
    </location>
    <ligand>
        <name>Mn(2+)</name>
        <dbReference type="ChEBI" id="CHEBI:29035"/>
    </ligand>
</feature>
<feature type="binding site" evidence="1">
    <location>
        <position position="28"/>
    </location>
    <ligand>
        <name>Mn(2+)</name>
        <dbReference type="ChEBI" id="CHEBI:29035"/>
    </ligand>
</feature>
<feature type="binding site" evidence="1">
    <location>
        <position position="64"/>
    </location>
    <ligand>
        <name>Mn(2+)</name>
        <dbReference type="ChEBI" id="CHEBI:29035"/>
    </ligand>
</feature>
<feature type="binding site" evidence="1">
    <location>
        <position position="82"/>
    </location>
    <ligand>
        <name>Mg(2+)</name>
        <dbReference type="ChEBI" id="CHEBI:18420"/>
    </ligand>
</feature>
<feature type="binding site" evidence="1">
    <location>
        <position position="108"/>
    </location>
    <ligand>
        <name>Mn(2+)</name>
        <dbReference type="ChEBI" id="CHEBI:29035"/>
    </ligand>
</feature>
<feature type="binding site" evidence="1">
    <location>
        <position position="110"/>
    </location>
    <ligand>
        <name>Mn(2+)</name>
        <dbReference type="ChEBI" id="CHEBI:29035"/>
    </ligand>
</feature>
<protein>
    <recommendedName>
        <fullName evidence="1">Isopentenyl-diphosphate Delta-isomerase</fullName>
        <shortName evidence="1">IPP isomerase</shortName>
        <ecNumber evidence="1">5.3.3.2</ecNumber>
    </recommendedName>
    <alternativeName>
        <fullName evidence="1">IPP:DMAPP isomerase</fullName>
    </alternativeName>
    <alternativeName>
        <fullName evidence="1">Isopentenyl pyrophosphate isomerase</fullName>
    </alternativeName>
</protein>
<accession>Q28W27</accession>